<comment type="function">
    <text evidence="1">Nucleotidase that shows phosphatase activity on nucleoside 5'-monophosphates.</text>
</comment>
<comment type="catalytic activity">
    <reaction evidence="1">
        <text>a ribonucleoside 5'-phosphate + H2O = a ribonucleoside + phosphate</text>
        <dbReference type="Rhea" id="RHEA:12484"/>
        <dbReference type="ChEBI" id="CHEBI:15377"/>
        <dbReference type="ChEBI" id="CHEBI:18254"/>
        <dbReference type="ChEBI" id="CHEBI:43474"/>
        <dbReference type="ChEBI" id="CHEBI:58043"/>
        <dbReference type="EC" id="3.1.3.5"/>
    </reaction>
</comment>
<comment type="cofactor">
    <cofactor evidence="1">
        <name>a divalent metal cation</name>
        <dbReference type="ChEBI" id="CHEBI:60240"/>
    </cofactor>
    <text evidence="1">Binds 1 divalent metal cation per subunit.</text>
</comment>
<comment type="subcellular location">
    <subcellularLocation>
        <location evidence="1">Cytoplasm</location>
    </subcellularLocation>
</comment>
<comment type="similarity">
    <text evidence="1">Belongs to the SurE nucleotidase family.</text>
</comment>
<feature type="chain" id="PRO_0000335284" description="5'-nucleotidase SurE">
    <location>
        <begin position="1"/>
        <end position="258"/>
    </location>
</feature>
<feature type="binding site" evidence="1">
    <location>
        <position position="10"/>
    </location>
    <ligand>
        <name>a divalent metal cation</name>
        <dbReference type="ChEBI" id="CHEBI:60240"/>
    </ligand>
</feature>
<feature type="binding site" evidence="1">
    <location>
        <position position="11"/>
    </location>
    <ligand>
        <name>a divalent metal cation</name>
        <dbReference type="ChEBI" id="CHEBI:60240"/>
    </ligand>
</feature>
<feature type="binding site" evidence="1">
    <location>
        <position position="41"/>
    </location>
    <ligand>
        <name>a divalent metal cation</name>
        <dbReference type="ChEBI" id="CHEBI:60240"/>
    </ligand>
</feature>
<feature type="binding site" evidence="1">
    <location>
        <position position="96"/>
    </location>
    <ligand>
        <name>a divalent metal cation</name>
        <dbReference type="ChEBI" id="CHEBI:60240"/>
    </ligand>
</feature>
<name>SURE_SORC5</name>
<reference key="1">
    <citation type="journal article" date="2007" name="Nat. Biotechnol.">
        <title>Complete genome sequence of the myxobacterium Sorangium cellulosum.</title>
        <authorList>
            <person name="Schneiker S."/>
            <person name="Perlova O."/>
            <person name="Kaiser O."/>
            <person name="Gerth K."/>
            <person name="Alici A."/>
            <person name="Altmeyer M.O."/>
            <person name="Bartels D."/>
            <person name="Bekel T."/>
            <person name="Beyer S."/>
            <person name="Bode E."/>
            <person name="Bode H.B."/>
            <person name="Bolten C.J."/>
            <person name="Choudhuri J.V."/>
            <person name="Doss S."/>
            <person name="Elnakady Y.A."/>
            <person name="Frank B."/>
            <person name="Gaigalat L."/>
            <person name="Goesmann A."/>
            <person name="Groeger C."/>
            <person name="Gross F."/>
            <person name="Jelsbak L."/>
            <person name="Jelsbak L."/>
            <person name="Kalinowski J."/>
            <person name="Kegler C."/>
            <person name="Knauber T."/>
            <person name="Konietzny S."/>
            <person name="Kopp M."/>
            <person name="Krause L."/>
            <person name="Krug D."/>
            <person name="Linke B."/>
            <person name="Mahmud T."/>
            <person name="Martinez-Arias R."/>
            <person name="McHardy A.C."/>
            <person name="Merai M."/>
            <person name="Meyer F."/>
            <person name="Mormann S."/>
            <person name="Munoz-Dorado J."/>
            <person name="Perez J."/>
            <person name="Pradella S."/>
            <person name="Rachid S."/>
            <person name="Raddatz G."/>
            <person name="Rosenau F."/>
            <person name="Rueckert C."/>
            <person name="Sasse F."/>
            <person name="Scharfe M."/>
            <person name="Schuster S.C."/>
            <person name="Suen G."/>
            <person name="Treuner-Lange A."/>
            <person name="Velicer G.J."/>
            <person name="Vorholter F.-J."/>
            <person name="Weissman K.J."/>
            <person name="Welch R.D."/>
            <person name="Wenzel S.C."/>
            <person name="Whitworth D.E."/>
            <person name="Wilhelm S."/>
            <person name="Wittmann C."/>
            <person name="Bloecker H."/>
            <person name="Puehler A."/>
            <person name="Mueller R."/>
        </authorList>
    </citation>
    <scope>NUCLEOTIDE SEQUENCE [LARGE SCALE GENOMIC DNA]</scope>
    <source>
        <strain>So ce56</strain>
    </source>
</reference>
<accession>A9GFF6</accession>
<gene>
    <name evidence="1" type="primary">surE</name>
    <name type="ordered locus">sce2984</name>
</gene>
<sequence length="258" mass="26784">MRPLILLSNDDGYSAPGLTAVRDELARHADVVVCAPAVNQSATSHSLSLHRVLRLLEAAPGVFAVDGTPADCIYVALHAGTRVLPRRPDLVVSGMNHGLNLGADIFYSGTVAAAREGALRGVPSIALSADAGASLPAAAALGVKLALALHRAAGQEGRRPAPLLNVNIPAGSSWPVRATRMGARLYTEEVIFRRDPRGHEYLWIGGAGVRHDLVPGSDTEAYDAGAVSVTPLTLDLFAAQHEGIAGLLAAELNDGPIP</sequence>
<organism>
    <name type="scientific">Sorangium cellulosum (strain So ce56)</name>
    <name type="common">Polyangium cellulosum (strain So ce56)</name>
    <dbReference type="NCBI Taxonomy" id="448385"/>
    <lineage>
        <taxon>Bacteria</taxon>
        <taxon>Pseudomonadati</taxon>
        <taxon>Myxococcota</taxon>
        <taxon>Polyangia</taxon>
        <taxon>Polyangiales</taxon>
        <taxon>Polyangiaceae</taxon>
        <taxon>Sorangium</taxon>
    </lineage>
</organism>
<protein>
    <recommendedName>
        <fullName evidence="1">5'-nucleotidase SurE</fullName>
        <ecNumber evidence="1">3.1.3.5</ecNumber>
    </recommendedName>
    <alternativeName>
        <fullName evidence="1">Nucleoside 5'-monophosphate phosphohydrolase</fullName>
    </alternativeName>
</protein>
<dbReference type="EC" id="3.1.3.5" evidence="1"/>
<dbReference type="EMBL" id="AM746676">
    <property type="protein sequence ID" value="CAN93143.1"/>
    <property type="molecule type" value="Genomic_DNA"/>
</dbReference>
<dbReference type="RefSeq" id="WP_012235615.1">
    <property type="nucleotide sequence ID" value="NC_010162.1"/>
</dbReference>
<dbReference type="SMR" id="A9GFF6"/>
<dbReference type="STRING" id="448385.sce2984"/>
<dbReference type="KEGG" id="scl:sce2984"/>
<dbReference type="eggNOG" id="COG0496">
    <property type="taxonomic scope" value="Bacteria"/>
</dbReference>
<dbReference type="HOGENOM" id="CLU_045192_1_2_7"/>
<dbReference type="OrthoDB" id="9780815at2"/>
<dbReference type="BioCyc" id="SCEL448385:SCE_RS15320-MONOMER"/>
<dbReference type="Proteomes" id="UP000002139">
    <property type="component" value="Chromosome"/>
</dbReference>
<dbReference type="GO" id="GO:0005737">
    <property type="term" value="C:cytoplasm"/>
    <property type="evidence" value="ECO:0007669"/>
    <property type="project" value="UniProtKB-SubCell"/>
</dbReference>
<dbReference type="GO" id="GO:0008254">
    <property type="term" value="F:3'-nucleotidase activity"/>
    <property type="evidence" value="ECO:0007669"/>
    <property type="project" value="TreeGrafter"/>
</dbReference>
<dbReference type="GO" id="GO:0008253">
    <property type="term" value="F:5'-nucleotidase activity"/>
    <property type="evidence" value="ECO:0007669"/>
    <property type="project" value="UniProtKB-UniRule"/>
</dbReference>
<dbReference type="GO" id="GO:0004309">
    <property type="term" value="F:exopolyphosphatase activity"/>
    <property type="evidence" value="ECO:0007669"/>
    <property type="project" value="TreeGrafter"/>
</dbReference>
<dbReference type="GO" id="GO:0046872">
    <property type="term" value="F:metal ion binding"/>
    <property type="evidence" value="ECO:0007669"/>
    <property type="project" value="UniProtKB-UniRule"/>
</dbReference>
<dbReference type="GO" id="GO:0000166">
    <property type="term" value="F:nucleotide binding"/>
    <property type="evidence" value="ECO:0007669"/>
    <property type="project" value="UniProtKB-KW"/>
</dbReference>
<dbReference type="Gene3D" id="3.40.1210.10">
    <property type="entry name" value="Survival protein SurE-like phosphatase/nucleotidase"/>
    <property type="match status" value="1"/>
</dbReference>
<dbReference type="HAMAP" id="MF_00060">
    <property type="entry name" value="SurE"/>
    <property type="match status" value="1"/>
</dbReference>
<dbReference type="InterPro" id="IPR030048">
    <property type="entry name" value="SurE"/>
</dbReference>
<dbReference type="InterPro" id="IPR002828">
    <property type="entry name" value="SurE-like_Pase/nucleotidase"/>
</dbReference>
<dbReference type="InterPro" id="IPR036523">
    <property type="entry name" value="SurE-like_sf"/>
</dbReference>
<dbReference type="NCBIfam" id="TIGR00087">
    <property type="entry name" value="surE"/>
    <property type="match status" value="1"/>
</dbReference>
<dbReference type="PANTHER" id="PTHR30457">
    <property type="entry name" value="5'-NUCLEOTIDASE SURE"/>
    <property type="match status" value="1"/>
</dbReference>
<dbReference type="PANTHER" id="PTHR30457:SF12">
    <property type="entry name" value="5'_3'-NUCLEOTIDASE SURE"/>
    <property type="match status" value="1"/>
</dbReference>
<dbReference type="Pfam" id="PF01975">
    <property type="entry name" value="SurE"/>
    <property type="match status" value="1"/>
</dbReference>
<dbReference type="SUPFAM" id="SSF64167">
    <property type="entry name" value="SurE-like"/>
    <property type="match status" value="1"/>
</dbReference>
<keyword id="KW-0963">Cytoplasm</keyword>
<keyword id="KW-0378">Hydrolase</keyword>
<keyword id="KW-0479">Metal-binding</keyword>
<keyword id="KW-0547">Nucleotide-binding</keyword>
<keyword id="KW-1185">Reference proteome</keyword>
<evidence type="ECO:0000255" key="1">
    <source>
        <dbReference type="HAMAP-Rule" id="MF_00060"/>
    </source>
</evidence>
<proteinExistence type="inferred from homology"/>